<feature type="chain" id="PRO_0000288508" description="TBC1 domain family member 25">
    <location>
        <begin position="1"/>
        <end position="688"/>
    </location>
</feature>
<feature type="domain" description="Rab-GAP TBC" evidence="2">
    <location>
        <begin position="228"/>
        <end position="434"/>
    </location>
</feature>
<feature type="region of interest" description="Disordered" evidence="3">
    <location>
        <begin position="1"/>
        <end position="27"/>
    </location>
</feature>
<feature type="region of interest" description="Disordered" evidence="3">
    <location>
        <begin position="544"/>
        <end position="606"/>
    </location>
</feature>
<feature type="compositionally biased region" description="Low complexity" evidence="3">
    <location>
        <begin position="544"/>
        <end position="567"/>
    </location>
</feature>
<feature type="compositionally biased region" description="Pro residues" evidence="3">
    <location>
        <begin position="596"/>
        <end position="606"/>
    </location>
</feature>
<feature type="modified residue" description="Phosphoserine" evidence="1">
    <location>
        <position position="140"/>
    </location>
</feature>
<feature type="modified residue" description="Phosphothreonine" evidence="1">
    <location>
        <position position="160"/>
    </location>
</feature>
<feature type="modified residue" description="Phosphoserine" evidence="8 9 10">
    <location>
        <position position="506"/>
    </location>
</feature>
<feature type="splice variant" id="VSP_025703" description="In isoform 2." evidence="6">
    <original>KKNFGISYLGRDRLGQEVYLSL</original>
    <variation>PIARRLGHNQPQRCHWLRRVAG</variation>
    <location>
        <begin position="79"/>
        <end position="100"/>
    </location>
</feature>
<feature type="splice variant" id="VSP_025704" description="In isoform 2." evidence="6">
    <location>
        <begin position="101"/>
        <end position="688"/>
    </location>
</feature>
<feature type="sequence variant" id="VAR_057345" description="In dbSNP:rs2293948." evidence="4">
    <original>N</original>
    <variation>S</variation>
    <location>
        <position position="277"/>
    </location>
</feature>
<feature type="mutagenesis site" description="Severely affects interaction with GABARAP. Does not localize at autophagosomes." evidence="5">
    <original>ED</original>
    <variation>AA</variation>
    <location>
        <begin position="134"/>
        <end position="135"/>
    </location>
</feature>
<feature type="mutagenesis site" description="Abolishes interaction with GABARAP. Does not localize at autophagosomes." evidence="5">
    <original>W</original>
    <variation>A</variation>
    <location>
        <position position="136"/>
    </location>
</feature>
<feature type="sequence conflict" description="In Ref. 2; AAI01818/AAI01820/AAI25089." evidence="7" ref="2">
    <original>A</original>
    <variation>T</variation>
    <location>
        <position position="455"/>
    </location>
</feature>
<comment type="function">
    <text evidence="5">Acts as a GTPase-activating protein specific for RAB33B. Involved in the regulation of autophagosome maturation, the process in which autophagosomes fuse with endosomes and lysosomes.</text>
</comment>
<comment type="subunit">
    <text evidence="5">Interacts (via N-terminus) with MAP1LC3B, GABARAP and GABARAPL2.</text>
</comment>
<comment type="interaction">
    <interactant intactId="EBI-11899977">
        <id>Q3MII6</id>
    </interactant>
    <interactant intactId="EBI-492498">
        <id>P18848</id>
        <label>ATF4</label>
    </interactant>
    <organismsDiffer>false</organismsDiffer>
    <experiments>2</experiments>
</comment>
<comment type="interaction">
    <interactant intactId="EBI-11899977">
        <id>Q3MII6</id>
    </interactant>
    <interactant intactId="EBI-10175124">
        <id>Q8IZU0</id>
        <label>FAM9B</label>
    </interactant>
    <organismsDiffer>false</organismsDiffer>
    <experiments>3</experiments>
</comment>
<comment type="interaction">
    <interactant intactId="EBI-11899977">
        <id>Q3MII6</id>
    </interactant>
    <interactant intactId="EBI-746969">
        <id>Q9H0R8</id>
        <label>GABARAPL1</label>
    </interactant>
    <organismsDiffer>false</organismsDiffer>
    <experiments>5</experiments>
</comment>
<comment type="interaction">
    <interactant intactId="EBI-11899977">
        <id>Q3MII6</id>
    </interactant>
    <interactant intactId="EBI-720116">
        <id>P60520</id>
        <label>GABARAPL2</label>
    </interactant>
    <organismsDiffer>false</organismsDiffer>
    <experiments>5</experiments>
</comment>
<comment type="interaction">
    <interactant intactId="EBI-11899977">
        <id>Q3MII6</id>
    </interactant>
    <interactant intactId="EBI-22452746">
        <id>Q9NZI2-2</id>
        <label>KCNIP1</label>
    </interactant>
    <organismsDiffer>false</organismsDiffer>
    <experiments>3</experiments>
</comment>
<comment type="interaction">
    <interactant intactId="EBI-11899977">
        <id>Q3MII6</id>
    </interactant>
    <interactant intactId="EBI-12036449">
        <id>Q659C4-6</id>
        <label>LARP1B</label>
    </interactant>
    <organismsDiffer>false</organismsDiffer>
    <experiments>3</experiments>
</comment>
<comment type="interaction">
    <interactant intactId="EBI-11899977">
        <id>Q3MII6</id>
    </interactant>
    <interactant intactId="EBI-10274069">
        <id>Q8TCE9</id>
        <label>LGALS14</label>
    </interactant>
    <organismsDiffer>false</organismsDiffer>
    <experiments>3</experiments>
</comment>
<comment type="interaction">
    <interactant intactId="EBI-11899977">
        <id>Q3MII6</id>
    </interactant>
    <interactant intactId="EBI-12028858">
        <id>Q8IXW0</id>
        <label>LMNTD2</label>
    </interactant>
    <organismsDiffer>false</organismsDiffer>
    <experiments>3</experiments>
</comment>
<comment type="interaction">
    <interactant intactId="EBI-11899977">
        <id>Q3MII6</id>
    </interactant>
    <interactant intactId="EBI-2603996">
        <id>Q9BXW4</id>
        <label>MAP1LC3C</label>
    </interactant>
    <organismsDiffer>false</organismsDiffer>
    <experiments>3</experiments>
</comment>
<comment type="interaction">
    <interactant intactId="EBI-11899977">
        <id>Q3MII6</id>
    </interactant>
    <interactant intactId="EBI-752037">
        <id>P61019</id>
        <label>RAB2A</label>
    </interactant>
    <organismsDiffer>false</organismsDiffer>
    <experiments>3</experiments>
</comment>
<comment type="interaction">
    <interactant intactId="EBI-11899977">
        <id>Q3MII6</id>
    </interactant>
    <interactant intactId="EBI-6257312">
        <id>Q9BVN2</id>
        <label>RUSC1</label>
    </interactant>
    <organismsDiffer>false</organismsDiffer>
    <experiments>3</experiments>
</comment>
<comment type="interaction">
    <interactant intactId="EBI-11899977">
        <id>Q3MII6</id>
    </interactant>
    <interactant intactId="EBI-11059915">
        <id>Q8N7C3</id>
        <label>TRIML2</label>
    </interactant>
    <organismsDiffer>false</organismsDiffer>
    <experiments>3</experiments>
</comment>
<comment type="subcellular location">
    <subcellularLocation>
        <location evidence="5">Cytoplasm</location>
    </subcellularLocation>
    <subcellularLocation>
        <location evidence="5">Cytoplasmic vesicle</location>
        <location evidence="5">Autophagosome</location>
    </subcellularLocation>
    <text>It is dispersed in the cytoplasm under nutrient-rich conditions. Localizes at autophagosomes under cell starving conditions.</text>
</comment>
<comment type="alternative products">
    <event type="alternative splicing"/>
    <isoform>
        <id>Q3MII6-1</id>
        <name>1</name>
        <sequence type="displayed"/>
    </isoform>
    <isoform>
        <id>Q3MII6-2</id>
        <name>2</name>
        <sequence type="described" ref="VSP_025703 VSP_025704"/>
    </isoform>
</comment>
<gene>
    <name type="primary">TBC1D25</name>
    <name type="synonym">OATL1</name>
</gene>
<dbReference type="EMBL" id="AC115618">
    <property type="status" value="NOT_ANNOTATED_CDS"/>
    <property type="molecule type" value="Genomic_DNA"/>
</dbReference>
<dbReference type="EMBL" id="AF196969">
    <property type="status" value="NOT_ANNOTATED_CDS"/>
    <property type="molecule type" value="Genomic_DNA"/>
</dbReference>
<dbReference type="EMBL" id="BC026050">
    <property type="protein sequence ID" value="AAH26050.1"/>
    <property type="molecule type" value="mRNA"/>
</dbReference>
<dbReference type="EMBL" id="BC101817">
    <property type="protein sequence ID" value="AAI01818.1"/>
    <property type="molecule type" value="mRNA"/>
</dbReference>
<dbReference type="EMBL" id="BC101819">
    <property type="protein sequence ID" value="AAI01820.1"/>
    <property type="molecule type" value="mRNA"/>
</dbReference>
<dbReference type="EMBL" id="BC125088">
    <property type="protein sequence ID" value="AAI25089.1"/>
    <property type="molecule type" value="mRNA"/>
</dbReference>
<dbReference type="EMBL" id="BC125089">
    <property type="protein sequence ID" value="AAI25090.2"/>
    <property type="molecule type" value="mRNA"/>
</dbReference>
<dbReference type="CCDS" id="CCDS35242.1">
    <molecule id="Q3MII6-1"/>
</dbReference>
<dbReference type="RefSeq" id="NP_001335191.1">
    <property type="nucleotide sequence ID" value="NM_001348262.1"/>
</dbReference>
<dbReference type="RefSeq" id="NP_002527.1">
    <molecule id="Q3MII6-1"/>
    <property type="nucleotide sequence ID" value="NM_002536.4"/>
</dbReference>
<dbReference type="SMR" id="Q3MII6"/>
<dbReference type="BioGRID" id="110997">
    <property type="interactions" value="60"/>
</dbReference>
<dbReference type="FunCoup" id="Q3MII6">
    <property type="interactions" value="1225"/>
</dbReference>
<dbReference type="IntAct" id="Q3MII6">
    <property type="interactions" value="21"/>
</dbReference>
<dbReference type="STRING" id="9606.ENSP00000365962"/>
<dbReference type="GlyCosmos" id="Q3MII6">
    <property type="glycosylation" value="1 site, 1 glycan"/>
</dbReference>
<dbReference type="GlyGen" id="Q3MII6">
    <property type="glycosylation" value="2 sites, 1 O-linked glycan (2 sites)"/>
</dbReference>
<dbReference type="iPTMnet" id="Q3MII6"/>
<dbReference type="PhosphoSitePlus" id="Q3MII6"/>
<dbReference type="BioMuta" id="TBC1D25"/>
<dbReference type="DMDM" id="296452922"/>
<dbReference type="jPOST" id="Q3MII6"/>
<dbReference type="MassIVE" id="Q3MII6"/>
<dbReference type="PaxDb" id="9606-ENSP00000365962"/>
<dbReference type="PeptideAtlas" id="Q3MII6"/>
<dbReference type="ProteomicsDB" id="61786">
    <molecule id="Q3MII6-1"/>
</dbReference>
<dbReference type="ProteomicsDB" id="61787">
    <molecule id="Q3MII6-2"/>
</dbReference>
<dbReference type="Pumba" id="Q3MII6"/>
<dbReference type="Antibodypedia" id="54837">
    <property type="antibodies" value="43 antibodies from 15 providers"/>
</dbReference>
<dbReference type="DNASU" id="4943"/>
<dbReference type="Ensembl" id="ENST00000376771.9">
    <molecule id="Q3MII6-1"/>
    <property type="protein sequence ID" value="ENSP00000365962.4"/>
    <property type="gene ID" value="ENSG00000068354.16"/>
</dbReference>
<dbReference type="Ensembl" id="ENST00000481090.6">
    <molecule id="Q3MII6-2"/>
    <property type="protein sequence ID" value="ENSP00000476787.1"/>
    <property type="gene ID" value="ENSG00000068354.16"/>
</dbReference>
<dbReference type="GeneID" id="4943"/>
<dbReference type="KEGG" id="hsa:4943"/>
<dbReference type="MANE-Select" id="ENST00000376771.9">
    <property type="protein sequence ID" value="ENSP00000365962.4"/>
    <property type="RefSeq nucleotide sequence ID" value="NM_002536.4"/>
    <property type="RefSeq protein sequence ID" value="NP_002527.1"/>
</dbReference>
<dbReference type="UCSC" id="uc004dka.2">
    <molecule id="Q3MII6-1"/>
    <property type="organism name" value="human"/>
</dbReference>
<dbReference type="AGR" id="HGNC:8092"/>
<dbReference type="CTD" id="4943"/>
<dbReference type="DisGeNET" id="4943"/>
<dbReference type="GeneCards" id="TBC1D25"/>
<dbReference type="HGNC" id="HGNC:8092">
    <property type="gene designation" value="TBC1D25"/>
</dbReference>
<dbReference type="HPA" id="ENSG00000068354">
    <property type="expression patterns" value="Low tissue specificity"/>
</dbReference>
<dbReference type="MIM" id="311240">
    <property type="type" value="gene"/>
</dbReference>
<dbReference type="neXtProt" id="NX_Q3MII6"/>
<dbReference type="OpenTargets" id="ENSG00000068354"/>
<dbReference type="PharmGKB" id="PA162405201"/>
<dbReference type="VEuPathDB" id="HostDB:ENSG00000068354"/>
<dbReference type="eggNOG" id="KOG2197">
    <property type="taxonomic scope" value="Eukaryota"/>
</dbReference>
<dbReference type="GeneTree" id="ENSGT00940000159173"/>
<dbReference type="HOGENOM" id="CLU_004382_1_0_1"/>
<dbReference type="InParanoid" id="Q3MII6"/>
<dbReference type="OMA" id="PFERQTS"/>
<dbReference type="OrthoDB" id="10264062at2759"/>
<dbReference type="PAN-GO" id="Q3MII6">
    <property type="GO annotations" value="4 GO annotations based on evolutionary models"/>
</dbReference>
<dbReference type="PhylomeDB" id="Q3MII6"/>
<dbReference type="TreeFam" id="TF323518"/>
<dbReference type="PathwayCommons" id="Q3MII6"/>
<dbReference type="Reactome" id="R-HSA-8854214">
    <property type="pathway name" value="TBC/RABGAPs"/>
</dbReference>
<dbReference type="SignaLink" id="Q3MII6"/>
<dbReference type="SIGNOR" id="Q3MII6"/>
<dbReference type="BioGRID-ORCS" id="4943">
    <property type="hits" value="12 hits in 791 CRISPR screens"/>
</dbReference>
<dbReference type="ChiTaRS" id="TBC1D25">
    <property type="organism name" value="human"/>
</dbReference>
<dbReference type="GenomeRNAi" id="4943"/>
<dbReference type="Pharos" id="Q3MII6">
    <property type="development level" value="Tbio"/>
</dbReference>
<dbReference type="PRO" id="PR:Q3MII6"/>
<dbReference type="Proteomes" id="UP000005640">
    <property type="component" value="Chromosome X"/>
</dbReference>
<dbReference type="RNAct" id="Q3MII6">
    <property type="molecule type" value="protein"/>
</dbReference>
<dbReference type="Bgee" id="ENSG00000068354">
    <property type="expression patterns" value="Expressed in ileal mucosa and 130 other cell types or tissues"/>
</dbReference>
<dbReference type="ExpressionAtlas" id="Q3MII6">
    <property type="expression patterns" value="baseline and differential"/>
</dbReference>
<dbReference type="GO" id="GO:0005776">
    <property type="term" value="C:autophagosome"/>
    <property type="evidence" value="ECO:0000314"/>
    <property type="project" value="UniProtKB"/>
</dbReference>
<dbReference type="GO" id="GO:0031410">
    <property type="term" value="C:cytoplasmic vesicle"/>
    <property type="evidence" value="ECO:0007669"/>
    <property type="project" value="UniProtKB-KW"/>
</dbReference>
<dbReference type="GO" id="GO:0005096">
    <property type="term" value="F:GTPase activator activity"/>
    <property type="evidence" value="ECO:0000314"/>
    <property type="project" value="UniProtKB"/>
</dbReference>
<dbReference type="GO" id="GO:0006914">
    <property type="term" value="P:autophagy"/>
    <property type="evidence" value="ECO:0007669"/>
    <property type="project" value="UniProtKB-KW"/>
</dbReference>
<dbReference type="GO" id="GO:1901096">
    <property type="term" value="P:regulation of autophagosome maturation"/>
    <property type="evidence" value="ECO:0000315"/>
    <property type="project" value="UniProtKB"/>
</dbReference>
<dbReference type="FunFam" id="1.10.8.270:FF:000020">
    <property type="entry name" value="Putative TBC1 domain family member 25"/>
    <property type="match status" value="1"/>
</dbReference>
<dbReference type="FunFam" id="1.10.472.80:FF:000039">
    <property type="entry name" value="TBC1 domain family member 25 isoform X1"/>
    <property type="match status" value="1"/>
</dbReference>
<dbReference type="Gene3D" id="1.10.8.270">
    <property type="entry name" value="putative rabgap domain of human tbc1 domain family member 14 like domains"/>
    <property type="match status" value="1"/>
</dbReference>
<dbReference type="Gene3D" id="1.10.472.80">
    <property type="entry name" value="Ypt/Rab-GAP domain of gyp1p, domain 3"/>
    <property type="match status" value="2"/>
</dbReference>
<dbReference type="InterPro" id="IPR000195">
    <property type="entry name" value="Rab-GAP-TBC_dom"/>
</dbReference>
<dbReference type="InterPro" id="IPR035969">
    <property type="entry name" value="Rab-GAP_TBC_sf"/>
</dbReference>
<dbReference type="PANTHER" id="PTHR22957:SF333">
    <property type="entry name" value="TBC1 DOMAIN FAMILY MEMBER 25"/>
    <property type="match status" value="1"/>
</dbReference>
<dbReference type="PANTHER" id="PTHR22957">
    <property type="entry name" value="TBC1 DOMAIN FAMILY MEMBER GTPASE-ACTIVATING PROTEIN"/>
    <property type="match status" value="1"/>
</dbReference>
<dbReference type="Pfam" id="PF00566">
    <property type="entry name" value="RabGAP-TBC"/>
    <property type="match status" value="1"/>
</dbReference>
<dbReference type="SMART" id="SM00164">
    <property type="entry name" value="TBC"/>
    <property type="match status" value="1"/>
</dbReference>
<dbReference type="SUPFAM" id="SSF47923">
    <property type="entry name" value="Ypt/Rab-GAP domain of gyp1p"/>
    <property type="match status" value="2"/>
</dbReference>
<dbReference type="PROSITE" id="PS50086">
    <property type="entry name" value="TBC_RABGAP"/>
    <property type="match status" value="1"/>
</dbReference>
<protein>
    <recommendedName>
        <fullName>TBC1 domain family member 25</fullName>
    </recommendedName>
</protein>
<reference key="1">
    <citation type="journal article" date="2005" name="Nature">
        <title>The DNA sequence of the human X chromosome.</title>
        <authorList>
            <person name="Ross M.T."/>
            <person name="Grafham D.V."/>
            <person name="Coffey A.J."/>
            <person name="Scherer S."/>
            <person name="McLay K."/>
            <person name="Muzny D."/>
            <person name="Platzer M."/>
            <person name="Howell G.R."/>
            <person name="Burrows C."/>
            <person name="Bird C.P."/>
            <person name="Frankish A."/>
            <person name="Lovell F.L."/>
            <person name="Howe K.L."/>
            <person name="Ashurst J.L."/>
            <person name="Fulton R.S."/>
            <person name="Sudbrak R."/>
            <person name="Wen G."/>
            <person name="Jones M.C."/>
            <person name="Hurles M.E."/>
            <person name="Andrews T.D."/>
            <person name="Scott C.E."/>
            <person name="Searle S."/>
            <person name="Ramser J."/>
            <person name="Whittaker A."/>
            <person name="Deadman R."/>
            <person name="Carter N.P."/>
            <person name="Hunt S.E."/>
            <person name="Chen R."/>
            <person name="Cree A."/>
            <person name="Gunaratne P."/>
            <person name="Havlak P."/>
            <person name="Hodgson A."/>
            <person name="Metzker M.L."/>
            <person name="Richards S."/>
            <person name="Scott G."/>
            <person name="Steffen D."/>
            <person name="Sodergren E."/>
            <person name="Wheeler D.A."/>
            <person name="Worley K.C."/>
            <person name="Ainscough R."/>
            <person name="Ambrose K.D."/>
            <person name="Ansari-Lari M.A."/>
            <person name="Aradhya S."/>
            <person name="Ashwell R.I."/>
            <person name="Babbage A.K."/>
            <person name="Bagguley C.L."/>
            <person name="Ballabio A."/>
            <person name="Banerjee R."/>
            <person name="Barker G.E."/>
            <person name="Barlow K.F."/>
            <person name="Barrett I.P."/>
            <person name="Bates K.N."/>
            <person name="Beare D.M."/>
            <person name="Beasley H."/>
            <person name="Beasley O."/>
            <person name="Beck A."/>
            <person name="Bethel G."/>
            <person name="Blechschmidt K."/>
            <person name="Brady N."/>
            <person name="Bray-Allen S."/>
            <person name="Bridgeman A.M."/>
            <person name="Brown A.J."/>
            <person name="Brown M.J."/>
            <person name="Bonnin D."/>
            <person name="Bruford E.A."/>
            <person name="Buhay C."/>
            <person name="Burch P."/>
            <person name="Burford D."/>
            <person name="Burgess J."/>
            <person name="Burrill W."/>
            <person name="Burton J."/>
            <person name="Bye J.M."/>
            <person name="Carder C."/>
            <person name="Carrel L."/>
            <person name="Chako J."/>
            <person name="Chapman J.C."/>
            <person name="Chavez D."/>
            <person name="Chen E."/>
            <person name="Chen G."/>
            <person name="Chen Y."/>
            <person name="Chen Z."/>
            <person name="Chinault C."/>
            <person name="Ciccodicola A."/>
            <person name="Clark S.Y."/>
            <person name="Clarke G."/>
            <person name="Clee C.M."/>
            <person name="Clegg S."/>
            <person name="Clerc-Blankenburg K."/>
            <person name="Clifford K."/>
            <person name="Cobley V."/>
            <person name="Cole C.G."/>
            <person name="Conquer J.S."/>
            <person name="Corby N."/>
            <person name="Connor R.E."/>
            <person name="David R."/>
            <person name="Davies J."/>
            <person name="Davis C."/>
            <person name="Davis J."/>
            <person name="Delgado O."/>
            <person name="Deshazo D."/>
            <person name="Dhami P."/>
            <person name="Ding Y."/>
            <person name="Dinh H."/>
            <person name="Dodsworth S."/>
            <person name="Draper H."/>
            <person name="Dugan-Rocha S."/>
            <person name="Dunham A."/>
            <person name="Dunn M."/>
            <person name="Durbin K.J."/>
            <person name="Dutta I."/>
            <person name="Eades T."/>
            <person name="Ellwood M."/>
            <person name="Emery-Cohen A."/>
            <person name="Errington H."/>
            <person name="Evans K.L."/>
            <person name="Faulkner L."/>
            <person name="Francis F."/>
            <person name="Frankland J."/>
            <person name="Fraser A.E."/>
            <person name="Galgoczy P."/>
            <person name="Gilbert J."/>
            <person name="Gill R."/>
            <person name="Gloeckner G."/>
            <person name="Gregory S.G."/>
            <person name="Gribble S."/>
            <person name="Griffiths C."/>
            <person name="Grocock R."/>
            <person name="Gu Y."/>
            <person name="Gwilliam R."/>
            <person name="Hamilton C."/>
            <person name="Hart E.A."/>
            <person name="Hawes A."/>
            <person name="Heath P.D."/>
            <person name="Heitmann K."/>
            <person name="Hennig S."/>
            <person name="Hernandez J."/>
            <person name="Hinzmann B."/>
            <person name="Ho S."/>
            <person name="Hoffs M."/>
            <person name="Howden P.J."/>
            <person name="Huckle E.J."/>
            <person name="Hume J."/>
            <person name="Hunt P.J."/>
            <person name="Hunt A.R."/>
            <person name="Isherwood J."/>
            <person name="Jacob L."/>
            <person name="Johnson D."/>
            <person name="Jones S."/>
            <person name="de Jong P.J."/>
            <person name="Joseph S.S."/>
            <person name="Keenan S."/>
            <person name="Kelly S."/>
            <person name="Kershaw J.K."/>
            <person name="Khan Z."/>
            <person name="Kioschis P."/>
            <person name="Klages S."/>
            <person name="Knights A.J."/>
            <person name="Kosiura A."/>
            <person name="Kovar-Smith C."/>
            <person name="Laird G.K."/>
            <person name="Langford C."/>
            <person name="Lawlor S."/>
            <person name="Leversha M."/>
            <person name="Lewis L."/>
            <person name="Liu W."/>
            <person name="Lloyd C."/>
            <person name="Lloyd D.M."/>
            <person name="Loulseged H."/>
            <person name="Loveland J.E."/>
            <person name="Lovell J.D."/>
            <person name="Lozado R."/>
            <person name="Lu J."/>
            <person name="Lyne R."/>
            <person name="Ma J."/>
            <person name="Maheshwari M."/>
            <person name="Matthews L.H."/>
            <person name="McDowall J."/>
            <person name="McLaren S."/>
            <person name="McMurray A."/>
            <person name="Meidl P."/>
            <person name="Meitinger T."/>
            <person name="Milne S."/>
            <person name="Miner G."/>
            <person name="Mistry S.L."/>
            <person name="Morgan M."/>
            <person name="Morris S."/>
            <person name="Mueller I."/>
            <person name="Mullikin J.C."/>
            <person name="Nguyen N."/>
            <person name="Nordsiek G."/>
            <person name="Nyakatura G."/>
            <person name="O'dell C.N."/>
            <person name="Okwuonu G."/>
            <person name="Palmer S."/>
            <person name="Pandian R."/>
            <person name="Parker D."/>
            <person name="Parrish J."/>
            <person name="Pasternak S."/>
            <person name="Patel D."/>
            <person name="Pearce A.V."/>
            <person name="Pearson D.M."/>
            <person name="Pelan S.E."/>
            <person name="Perez L."/>
            <person name="Porter K.M."/>
            <person name="Ramsey Y."/>
            <person name="Reichwald K."/>
            <person name="Rhodes S."/>
            <person name="Ridler K.A."/>
            <person name="Schlessinger D."/>
            <person name="Schueler M.G."/>
            <person name="Sehra H.K."/>
            <person name="Shaw-Smith C."/>
            <person name="Shen H."/>
            <person name="Sheridan E.M."/>
            <person name="Shownkeen R."/>
            <person name="Skuce C.D."/>
            <person name="Smith M.L."/>
            <person name="Sotheran E.C."/>
            <person name="Steingruber H.E."/>
            <person name="Steward C.A."/>
            <person name="Storey R."/>
            <person name="Swann R.M."/>
            <person name="Swarbreck D."/>
            <person name="Tabor P.E."/>
            <person name="Taudien S."/>
            <person name="Taylor T."/>
            <person name="Teague B."/>
            <person name="Thomas K."/>
            <person name="Thorpe A."/>
            <person name="Timms K."/>
            <person name="Tracey A."/>
            <person name="Trevanion S."/>
            <person name="Tromans A.C."/>
            <person name="d'Urso M."/>
            <person name="Verduzco D."/>
            <person name="Villasana D."/>
            <person name="Waldron L."/>
            <person name="Wall M."/>
            <person name="Wang Q."/>
            <person name="Warren J."/>
            <person name="Warry G.L."/>
            <person name="Wei X."/>
            <person name="West A."/>
            <person name="Whitehead S.L."/>
            <person name="Whiteley M.N."/>
            <person name="Wilkinson J.E."/>
            <person name="Willey D.L."/>
            <person name="Williams G."/>
            <person name="Williams L."/>
            <person name="Williamson A."/>
            <person name="Williamson H."/>
            <person name="Wilming L."/>
            <person name="Woodmansey R.L."/>
            <person name="Wray P.W."/>
            <person name="Yen J."/>
            <person name="Zhang J."/>
            <person name="Zhou J."/>
            <person name="Zoghbi H."/>
            <person name="Zorilla S."/>
            <person name="Buck D."/>
            <person name="Reinhardt R."/>
            <person name="Poustka A."/>
            <person name="Rosenthal A."/>
            <person name="Lehrach H."/>
            <person name="Meindl A."/>
            <person name="Minx P.J."/>
            <person name="Hillier L.W."/>
            <person name="Willard H.F."/>
            <person name="Wilson R.K."/>
            <person name="Waterston R.H."/>
            <person name="Rice C.M."/>
            <person name="Vaudin M."/>
            <person name="Coulson A."/>
            <person name="Nelson D.L."/>
            <person name="Weinstock G."/>
            <person name="Sulston J.E."/>
            <person name="Durbin R.M."/>
            <person name="Hubbard T."/>
            <person name="Gibbs R.A."/>
            <person name="Beck S."/>
            <person name="Rogers J."/>
            <person name="Bentley D.R."/>
        </authorList>
    </citation>
    <scope>NUCLEOTIDE SEQUENCE [LARGE SCALE GENOMIC DNA]</scope>
</reference>
<reference key="2">
    <citation type="journal article" date="2004" name="Genome Res.">
        <title>The status, quality, and expansion of the NIH full-length cDNA project: the Mammalian Gene Collection (MGC).</title>
        <authorList>
            <consortium name="The MGC Project Team"/>
        </authorList>
    </citation>
    <scope>NUCLEOTIDE SEQUENCE [LARGE SCALE MRNA] (ISOFORMS 1 AND 2)</scope>
    <scope>VARIANT SER-277</scope>
    <source>
        <tissue>Brain</tissue>
        <tissue>Pancreas</tissue>
    </source>
</reference>
<reference key="3">
    <citation type="journal article" date="2008" name="Proc. Natl. Acad. Sci. U.S.A.">
        <title>A quantitative atlas of mitotic phosphorylation.</title>
        <authorList>
            <person name="Dephoure N."/>
            <person name="Zhou C."/>
            <person name="Villen J."/>
            <person name="Beausoleil S.A."/>
            <person name="Bakalarski C.E."/>
            <person name="Elledge S.J."/>
            <person name="Gygi S.P."/>
        </authorList>
    </citation>
    <scope>IDENTIFICATION BY MASS SPECTROMETRY [LARGE SCALE ANALYSIS]</scope>
    <source>
        <tissue>Cervix carcinoma</tissue>
    </source>
</reference>
<reference key="4">
    <citation type="journal article" date="2009" name="Sci. Signal.">
        <title>Quantitative phosphoproteomic analysis of T cell receptor signaling reveals system-wide modulation of protein-protein interactions.</title>
        <authorList>
            <person name="Mayya V."/>
            <person name="Lundgren D.H."/>
            <person name="Hwang S.-I."/>
            <person name="Rezaul K."/>
            <person name="Wu L."/>
            <person name="Eng J.K."/>
            <person name="Rodionov V."/>
            <person name="Han D.K."/>
        </authorList>
    </citation>
    <scope>IDENTIFICATION BY MASS SPECTROMETRY [LARGE SCALE ANALYSIS]</scope>
    <source>
        <tissue>Leukemic T-cell</tissue>
    </source>
</reference>
<reference key="5">
    <citation type="journal article" date="2010" name="Sci. Signal.">
        <title>Quantitative phosphoproteomics reveals widespread full phosphorylation site occupancy during mitosis.</title>
        <authorList>
            <person name="Olsen J.V."/>
            <person name="Vermeulen M."/>
            <person name="Santamaria A."/>
            <person name="Kumar C."/>
            <person name="Miller M.L."/>
            <person name="Jensen L.J."/>
            <person name="Gnad F."/>
            <person name="Cox J."/>
            <person name="Jensen T.S."/>
            <person name="Nigg E.A."/>
            <person name="Brunak S."/>
            <person name="Mann M."/>
        </authorList>
    </citation>
    <scope>PHOSPHORYLATION [LARGE SCALE ANALYSIS] AT SER-506</scope>
    <scope>IDENTIFICATION BY MASS SPECTROMETRY [LARGE SCALE ANALYSIS]</scope>
    <source>
        <tissue>Cervix carcinoma</tissue>
    </source>
</reference>
<reference key="6">
    <citation type="journal article" date="2011" name="J. Cell Biol.">
        <title>OATL1, a novel autophagosome-resident Rab33B-GAP, regulates autophagosomal maturation.</title>
        <authorList>
            <person name="Itoh T."/>
            <person name="Kanno E."/>
            <person name="Uemura T."/>
            <person name="Waguri S."/>
            <person name="Fukuda M."/>
        </authorList>
    </citation>
    <scope>FUNCTION</scope>
    <scope>SUBCELLULAR LOCATION</scope>
    <scope>INTERACTION WITH MAP1LC3B; GABARAP AND GABARAPL2</scope>
    <scope>MUTAGENESIS OF 134-GLU-ASP-135 AND TRP-136</scope>
</reference>
<reference key="7">
    <citation type="journal article" date="2013" name="J. Proteome Res.">
        <title>Toward a comprehensive characterization of a human cancer cell phosphoproteome.</title>
        <authorList>
            <person name="Zhou H."/>
            <person name="Di Palma S."/>
            <person name="Preisinger C."/>
            <person name="Peng M."/>
            <person name="Polat A.N."/>
            <person name="Heck A.J."/>
            <person name="Mohammed S."/>
        </authorList>
    </citation>
    <scope>PHOSPHORYLATION [LARGE SCALE ANALYSIS] AT SER-506</scope>
    <scope>IDENTIFICATION BY MASS SPECTROMETRY [LARGE SCALE ANALYSIS]</scope>
    <source>
        <tissue>Cervix carcinoma</tissue>
        <tissue>Erythroleukemia</tissue>
    </source>
</reference>
<reference key="8">
    <citation type="journal article" date="2014" name="J. Proteomics">
        <title>An enzyme assisted RP-RPLC approach for in-depth analysis of human liver phosphoproteome.</title>
        <authorList>
            <person name="Bian Y."/>
            <person name="Song C."/>
            <person name="Cheng K."/>
            <person name="Dong M."/>
            <person name="Wang F."/>
            <person name="Huang J."/>
            <person name="Sun D."/>
            <person name="Wang L."/>
            <person name="Ye M."/>
            <person name="Zou H."/>
        </authorList>
    </citation>
    <scope>PHOSPHORYLATION [LARGE SCALE ANALYSIS] AT SER-506</scope>
    <scope>IDENTIFICATION BY MASS SPECTROMETRY [LARGE SCALE ANALYSIS]</scope>
    <source>
        <tissue>Liver</tissue>
    </source>
</reference>
<sequence>MATASGASDLSGSGAPPPGVGAQAAAAAEEEEREVVRVRVKKCESFLPPEFRSFAVDPQITSLDVLQHILIRAFDLSGKKNFGISYLGRDRLGQEVYLSLLSDWDLSTAFATASKPYLQLRVDIRPSEDSPLLEDWDIISPKDVIGSDVLLAEKRSSLTTAALPFTQSILTQVGRTLSKVQQVLSWSYGEDVKPFKPPLSDAEFHTYLNHEGQLSRPEELRLRIYHGGVEPSLRKVVWRYLLNVYPDGLTGRERMDYMKRKSREYEQLKSEWAQRANPEDLEFIRSTVLKDVLRTDRAHPYYAGPEDGPHLRALHDLLTTYAVTHPQVSYCQGMSDLASPILAVMDHEGHAFVCFCGIMKRLAANFHPDGRAMATKFAHLKLLLRHADPDFYQYLQEAGADDLFFCYRWLLLELKREFAFDDALRMLEVTWSSLPPDPPEHEVELVGPPSQVADAGFGGHRGWPVRQRHMLRPAGGGGSTFEDAVDHLATASQGPGGGGRLLRQASLDGLQQLRDNMGSRRDPLVQLPHPAALISSKSLSEPLLNSPDPLLSSFSHPDSPSSSSPPSTQEASPTGDMAVGSPLMQEVGSPKDPGKSLPPVPPMGLPPPQEFGRGNPFMLFLCLAILLEHRDHIMRNGLDYNELAMHFDRLVRKHHLGRVLRRARALFADYLQSEVWDSEEGAEATAAS</sequence>
<proteinExistence type="evidence at protein level"/>
<keyword id="KW-0025">Alternative splicing</keyword>
<keyword id="KW-0072">Autophagy</keyword>
<keyword id="KW-0963">Cytoplasm</keyword>
<keyword id="KW-0968">Cytoplasmic vesicle</keyword>
<keyword id="KW-0343">GTPase activation</keyword>
<keyword id="KW-0597">Phosphoprotein</keyword>
<keyword id="KW-1267">Proteomics identification</keyword>
<keyword id="KW-1185">Reference proteome</keyword>
<evidence type="ECO:0000250" key="1">
    <source>
        <dbReference type="UniProtKB" id="A1A5B6"/>
    </source>
</evidence>
<evidence type="ECO:0000255" key="2">
    <source>
        <dbReference type="PROSITE-ProRule" id="PRU00163"/>
    </source>
</evidence>
<evidence type="ECO:0000256" key="3">
    <source>
        <dbReference type="SAM" id="MobiDB-lite"/>
    </source>
</evidence>
<evidence type="ECO:0000269" key="4">
    <source>
    </source>
</evidence>
<evidence type="ECO:0000269" key="5">
    <source>
    </source>
</evidence>
<evidence type="ECO:0000303" key="6">
    <source>
    </source>
</evidence>
<evidence type="ECO:0000305" key="7"/>
<evidence type="ECO:0007744" key="8">
    <source>
    </source>
</evidence>
<evidence type="ECO:0007744" key="9">
    <source>
    </source>
</evidence>
<evidence type="ECO:0007744" key="10">
    <source>
    </source>
</evidence>
<name>TBC25_HUMAN</name>
<organism>
    <name type="scientific">Homo sapiens</name>
    <name type="common">Human</name>
    <dbReference type="NCBI Taxonomy" id="9606"/>
    <lineage>
        <taxon>Eukaryota</taxon>
        <taxon>Metazoa</taxon>
        <taxon>Chordata</taxon>
        <taxon>Craniata</taxon>
        <taxon>Vertebrata</taxon>
        <taxon>Euteleostomi</taxon>
        <taxon>Mammalia</taxon>
        <taxon>Eutheria</taxon>
        <taxon>Euarchontoglires</taxon>
        <taxon>Primates</taxon>
        <taxon>Haplorrhini</taxon>
        <taxon>Catarrhini</taxon>
        <taxon>Hominidae</taxon>
        <taxon>Homo</taxon>
    </lineage>
</organism>
<accession>Q3MII6</accession>
<accession>Q08AN9</accession>
<accession>Q3MII4</accession>
<accession>Q8TAR9</accession>